<comment type="function">
    <text evidence="1">Involved in the binding of tRNA to the ribosomes.</text>
</comment>
<comment type="subunit">
    <text evidence="1">Part of the 30S ribosomal subunit.</text>
</comment>
<comment type="similarity">
    <text evidence="1">Belongs to the universal ribosomal protein uS10 family.</text>
</comment>
<proteinExistence type="inferred from homology"/>
<protein>
    <recommendedName>
        <fullName evidence="1">Small ribosomal subunit protein uS10</fullName>
    </recommendedName>
    <alternativeName>
        <fullName evidence="2">30S ribosomal protein S10</fullName>
    </alternativeName>
</protein>
<gene>
    <name evidence="1" type="primary">rpsJ</name>
    <name type="ordered locus">LGAS_0290</name>
</gene>
<keyword id="KW-0687">Ribonucleoprotein</keyword>
<keyword id="KW-0689">Ribosomal protein</keyword>
<sequence>MASQQIRIRLKSYEHGILDESAAKIVATAERTGAQISGPVPLPTERTLFTVLRSPHKNKDSREQFEIRTHKRLIDILNPTPKTVDSLMKLDLPSGVDIEIKL</sequence>
<accession>Q046C6</accession>
<name>RS10_LACGA</name>
<reference key="1">
    <citation type="journal article" date="2006" name="Proc. Natl. Acad. Sci. U.S.A.">
        <title>Comparative genomics of the lactic acid bacteria.</title>
        <authorList>
            <person name="Makarova K.S."/>
            <person name="Slesarev A."/>
            <person name="Wolf Y.I."/>
            <person name="Sorokin A."/>
            <person name="Mirkin B."/>
            <person name="Koonin E.V."/>
            <person name="Pavlov A."/>
            <person name="Pavlova N."/>
            <person name="Karamychev V."/>
            <person name="Polouchine N."/>
            <person name="Shakhova V."/>
            <person name="Grigoriev I."/>
            <person name="Lou Y."/>
            <person name="Rohksar D."/>
            <person name="Lucas S."/>
            <person name="Huang K."/>
            <person name="Goodstein D.M."/>
            <person name="Hawkins T."/>
            <person name="Plengvidhya V."/>
            <person name="Welker D."/>
            <person name="Hughes J."/>
            <person name="Goh Y."/>
            <person name="Benson A."/>
            <person name="Baldwin K."/>
            <person name="Lee J.-H."/>
            <person name="Diaz-Muniz I."/>
            <person name="Dosti B."/>
            <person name="Smeianov V."/>
            <person name="Wechter W."/>
            <person name="Barabote R."/>
            <person name="Lorca G."/>
            <person name="Altermann E."/>
            <person name="Barrangou R."/>
            <person name="Ganesan B."/>
            <person name="Xie Y."/>
            <person name="Rawsthorne H."/>
            <person name="Tamir D."/>
            <person name="Parker C."/>
            <person name="Breidt F."/>
            <person name="Broadbent J.R."/>
            <person name="Hutkins R."/>
            <person name="O'Sullivan D."/>
            <person name="Steele J."/>
            <person name="Unlu G."/>
            <person name="Saier M.H. Jr."/>
            <person name="Klaenhammer T."/>
            <person name="Richardson P."/>
            <person name="Kozyavkin S."/>
            <person name="Weimer B.C."/>
            <person name="Mills D.A."/>
        </authorList>
    </citation>
    <scope>NUCLEOTIDE SEQUENCE [LARGE SCALE GENOMIC DNA]</scope>
    <source>
        <strain>ATCC 33323 / DSM 20243 / BCRC 14619 / CIP 102991 / JCM 1131 / KCTC 3163 / NCIMB 11718 / NCTC 13722 / AM63</strain>
    </source>
</reference>
<evidence type="ECO:0000255" key="1">
    <source>
        <dbReference type="HAMAP-Rule" id="MF_00508"/>
    </source>
</evidence>
<evidence type="ECO:0000305" key="2"/>
<feature type="chain" id="PRO_1000015040" description="Small ribosomal subunit protein uS10">
    <location>
        <begin position="1"/>
        <end position="102"/>
    </location>
</feature>
<dbReference type="EMBL" id="CP000413">
    <property type="protein sequence ID" value="ABJ59696.1"/>
    <property type="molecule type" value="Genomic_DNA"/>
</dbReference>
<dbReference type="RefSeq" id="WP_003647835.1">
    <property type="nucleotide sequence ID" value="NZ_WBMG01000001.1"/>
</dbReference>
<dbReference type="SMR" id="Q046C6"/>
<dbReference type="GeneID" id="83569753"/>
<dbReference type="KEGG" id="lga:LGAS_0290"/>
<dbReference type="HOGENOM" id="CLU_122625_1_3_9"/>
<dbReference type="BioCyc" id="LGAS324831:G1G6Y-288-MONOMER"/>
<dbReference type="Proteomes" id="UP000000664">
    <property type="component" value="Chromosome"/>
</dbReference>
<dbReference type="GO" id="GO:1990904">
    <property type="term" value="C:ribonucleoprotein complex"/>
    <property type="evidence" value="ECO:0007669"/>
    <property type="project" value="UniProtKB-KW"/>
</dbReference>
<dbReference type="GO" id="GO:0005840">
    <property type="term" value="C:ribosome"/>
    <property type="evidence" value="ECO:0007669"/>
    <property type="project" value="UniProtKB-KW"/>
</dbReference>
<dbReference type="GO" id="GO:0003735">
    <property type="term" value="F:structural constituent of ribosome"/>
    <property type="evidence" value="ECO:0007669"/>
    <property type="project" value="InterPro"/>
</dbReference>
<dbReference type="GO" id="GO:0000049">
    <property type="term" value="F:tRNA binding"/>
    <property type="evidence" value="ECO:0007669"/>
    <property type="project" value="UniProtKB-UniRule"/>
</dbReference>
<dbReference type="GO" id="GO:0006412">
    <property type="term" value="P:translation"/>
    <property type="evidence" value="ECO:0007669"/>
    <property type="project" value="UniProtKB-UniRule"/>
</dbReference>
<dbReference type="FunFam" id="3.30.70.600:FF:000001">
    <property type="entry name" value="30S ribosomal protein S10"/>
    <property type="match status" value="1"/>
</dbReference>
<dbReference type="Gene3D" id="3.30.70.600">
    <property type="entry name" value="Ribosomal protein S10 domain"/>
    <property type="match status" value="1"/>
</dbReference>
<dbReference type="HAMAP" id="MF_00508">
    <property type="entry name" value="Ribosomal_uS10"/>
    <property type="match status" value="1"/>
</dbReference>
<dbReference type="InterPro" id="IPR001848">
    <property type="entry name" value="Ribosomal_uS10"/>
</dbReference>
<dbReference type="InterPro" id="IPR018268">
    <property type="entry name" value="Ribosomal_uS10_CS"/>
</dbReference>
<dbReference type="InterPro" id="IPR027486">
    <property type="entry name" value="Ribosomal_uS10_dom"/>
</dbReference>
<dbReference type="InterPro" id="IPR036838">
    <property type="entry name" value="Ribosomal_uS10_dom_sf"/>
</dbReference>
<dbReference type="NCBIfam" id="NF001861">
    <property type="entry name" value="PRK00596.1"/>
    <property type="match status" value="1"/>
</dbReference>
<dbReference type="NCBIfam" id="TIGR01049">
    <property type="entry name" value="rpsJ_bact"/>
    <property type="match status" value="1"/>
</dbReference>
<dbReference type="PANTHER" id="PTHR11700">
    <property type="entry name" value="30S RIBOSOMAL PROTEIN S10 FAMILY MEMBER"/>
    <property type="match status" value="1"/>
</dbReference>
<dbReference type="Pfam" id="PF00338">
    <property type="entry name" value="Ribosomal_S10"/>
    <property type="match status" value="1"/>
</dbReference>
<dbReference type="PRINTS" id="PR00971">
    <property type="entry name" value="RIBOSOMALS10"/>
</dbReference>
<dbReference type="SMART" id="SM01403">
    <property type="entry name" value="Ribosomal_S10"/>
    <property type="match status" value="1"/>
</dbReference>
<dbReference type="SUPFAM" id="SSF54999">
    <property type="entry name" value="Ribosomal protein S10"/>
    <property type="match status" value="1"/>
</dbReference>
<dbReference type="PROSITE" id="PS00361">
    <property type="entry name" value="RIBOSOMAL_S10"/>
    <property type="match status" value="1"/>
</dbReference>
<organism>
    <name type="scientific">Lactobacillus gasseri (strain ATCC 33323 / DSM 20243 / BCRC 14619 / CIP 102991 / JCM 1131 / KCTC 3163 / NCIMB 11718 / NCTC 13722 / AM63)</name>
    <dbReference type="NCBI Taxonomy" id="324831"/>
    <lineage>
        <taxon>Bacteria</taxon>
        <taxon>Bacillati</taxon>
        <taxon>Bacillota</taxon>
        <taxon>Bacilli</taxon>
        <taxon>Lactobacillales</taxon>
        <taxon>Lactobacillaceae</taxon>
        <taxon>Lactobacillus</taxon>
    </lineage>
</organism>